<organism>
    <name type="scientific">Legionella pneumophila subsp. pneumophila (strain Philadelphia 1 / ATCC 33152 / DSM 7513)</name>
    <dbReference type="NCBI Taxonomy" id="272624"/>
    <lineage>
        <taxon>Bacteria</taxon>
        <taxon>Pseudomonadati</taxon>
        <taxon>Pseudomonadota</taxon>
        <taxon>Gammaproteobacteria</taxon>
        <taxon>Legionellales</taxon>
        <taxon>Legionellaceae</taxon>
        <taxon>Legionella</taxon>
    </lineage>
</organism>
<protein>
    <recommendedName>
        <fullName evidence="2">Probable peptidoglycan glycosyltransferase FtsW</fullName>
        <shortName evidence="2">PGT</shortName>
        <ecNumber evidence="2">2.4.99.28</ecNumber>
    </recommendedName>
    <alternativeName>
        <fullName evidence="2">Cell division protein FtsW</fullName>
    </alternativeName>
    <alternativeName>
        <fullName evidence="2">Cell wall polymerase</fullName>
    </alternativeName>
    <alternativeName>
        <fullName evidence="2">Peptidoglycan polymerase</fullName>
        <shortName evidence="2">PG polymerase</shortName>
    </alternativeName>
</protein>
<evidence type="ECO:0000255" key="1"/>
<evidence type="ECO:0000255" key="2">
    <source>
        <dbReference type="HAMAP-Rule" id="MF_00913"/>
    </source>
</evidence>
<gene>
    <name evidence="2" type="primary">ftsW</name>
    <name type="ordered locus">lpg2615</name>
</gene>
<dbReference type="EC" id="2.4.99.28" evidence="2"/>
<dbReference type="EMBL" id="AE017354">
    <property type="protein sequence ID" value="AAU28673.1"/>
    <property type="molecule type" value="Genomic_DNA"/>
</dbReference>
<dbReference type="RefSeq" id="YP_096620.1">
    <property type="nucleotide sequence ID" value="NC_002942.5"/>
</dbReference>
<dbReference type="SMR" id="Q5ZSA4"/>
<dbReference type="STRING" id="272624.lpg2615"/>
<dbReference type="PaxDb" id="272624-lpg2615"/>
<dbReference type="KEGG" id="lpn:lpg2615"/>
<dbReference type="PATRIC" id="fig|272624.6.peg.2790"/>
<dbReference type="eggNOG" id="COG0772">
    <property type="taxonomic scope" value="Bacteria"/>
</dbReference>
<dbReference type="HOGENOM" id="CLU_029243_1_1_6"/>
<dbReference type="OrthoDB" id="9768187at2"/>
<dbReference type="UniPathway" id="UPA00219"/>
<dbReference type="Proteomes" id="UP000000609">
    <property type="component" value="Chromosome"/>
</dbReference>
<dbReference type="GO" id="GO:0032153">
    <property type="term" value="C:cell division site"/>
    <property type="evidence" value="ECO:0007669"/>
    <property type="project" value="UniProtKB-UniRule"/>
</dbReference>
<dbReference type="GO" id="GO:0005886">
    <property type="term" value="C:plasma membrane"/>
    <property type="evidence" value="ECO:0007669"/>
    <property type="project" value="UniProtKB-SubCell"/>
</dbReference>
<dbReference type="GO" id="GO:0015648">
    <property type="term" value="F:lipid-linked peptidoglycan transporter activity"/>
    <property type="evidence" value="ECO:0007669"/>
    <property type="project" value="TreeGrafter"/>
</dbReference>
<dbReference type="GO" id="GO:0008955">
    <property type="term" value="F:peptidoglycan glycosyltransferase activity"/>
    <property type="evidence" value="ECO:0007669"/>
    <property type="project" value="UniProtKB-UniRule"/>
</dbReference>
<dbReference type="GO" id="GO:0071555">
    <property type="term" value="P:cell wall organization"/>
    <property type="evidence" value="ECO:0007669"/>
    <property type="project" value="UniProtKB-KW"/>
</dbReference>
<dbReference type="GO" id="GO:0043093">
    <property type="term" value="P:FtsZ-dependent cytokinesis"/>
    <property type="evidence" value="ECO:0007669"/>
    <property type="project" value="UniProtKB-UniRule"/>
</dbReference>
<dbReference type="GO" id="GO:0009252">
    <property type="term" value="P:peptidoglycan biosynthetic process"/>
    <property type="evidence" value="ECO:0007669"/>
    <property type="project" value="UniProtKB-UniRule"/>
</dbReference>
<dbReference type="GO" id="GO:0008360">
    <property type="term" value="P:regulation of cell shape"/>
    <property type="evidence" value="ECO:0007669"/>
    <property type="project" value="UniProtKB-KW"/>
</dbReference>
<dbReference type="HAMAP" id="MF_00913">
    <property type="entry name" value="PGT_FtsW_proteobact"/>
    <property type="match status" value="1"/>
</dbReference>
<dbReference type="InterPro" id="IPR013437">
    <property type="entry name" value="FtsW"/>
</dbReference>
<dbReference type="InterPro" id="IPR001182">
    <property type="entry name" value="FtsW/RodA"/>
</dbReference>
<dbReference type="NCBIfam" id="TIGR02614">
    <property type="entry name" value="ftsW"/>
    <property type="match status" value="1"/>
</dbReference>
<dbReference type="PANTHER" id="PTHR30474">
    <property type="entry name" value="CELL CYCLE PROTEIN"/>
    <property type="match status" value="1"/>
</dbReference>
<dbReference type="PANTHER" id="PTHR30474:SF2">
    <property type="entry name" value="PEPTIDOGLYCAN GLYCOSYLTRANSFERASE FTSW-RELATED"/>
    <property type="match status" value="1"/>
</dbReference>
<dbReference type="Pfam" id="PF01098">
    <property type="entry name" value="FTSW_RODA_SPOVE"/>
    <property type="match status" value="1"/>
</dbReference>
<proteinExistence type="inferred from homology"/>
<sequence>MNTMRPRHLNQRGKPVSRPISLYDKWLIGAVFGLLIIGLMMVASSSVMISTKYFHQPFHFLIRQACYLFVGLLLALIVVRTDSSFWEKISMPMMIGCVFLLLIVLIPGIGKSVNGSRRWLALGPIGVQVSELTKLAMIFYLSGYLVRQQEAVCESIFGFIKPMAILAVVSVLLLLEPDFGATVVISGTVMAMLFLAGVKLRYYFGLMLVVVTALALLAVSSPYRVARLTAFLDPWADQYNSGYQLTQSLIAFGRGGWFGTGLGESIQKLLYLPEAHTDFLFAVIAEELGLFGILVVITLYSILVIRGLNIGYTAYTQERHFASYTAYGLTIWLALQASINMGVNAGLLPTKGLTLPLLSYGGASMVINCIVIALLLRIDHENRWQSLGLRPLTA</sequence>
<feature type="chain" id="PRO_0000415194" description="Probable peptidoglycan glycosyltransferase FtsW">
    <location>
        <begin position="1"/>
        <end position="394"/>
    </location>
</feature>
<feature type="topological domain" description="Cytoplasmic" evidence="1">
    <location>
        <begin position="1"/>
        <end position="26"/>
    </location>
</feature>
<feature type="transmembrane region" description="Helical" evidence="2">
    <location>
        <begin position="27"/>
        <end position="47"/>
    </location>
</feature>
<feature type="topological domain" description="Periplasmic" evidence="1">
    <location>
        <begin position="48"/>
        <end position="57"/>
    </location>
</feature>
<feature type="transmembrane region" description="Helical" evidence="2">
    <location>
        <begin position="58"/>
        <end position="78"/>
    </location>
</feature>
<feature type="topological domain" description="Cytoplasmic" evidence="1">
    <location>
        <begin position="79"/>
        <end position="88"/>
    </location>
</feature>
<feature type="transmembrane region" description="Helical" evidence="2">
    <location>
        <begin position="89"/>
        <end position="109"/>
    </location>
</feature>
<feature type="topological domain" description="Periplasmic" evidence="1">
    <location>
        <begin position="110"/>
        <end position="118"/>
    </location>
</feature>
<feature type="transmembrane region" description="Helical" evidence="2">
    <location>
        <begin position="119"/>
        <end position="139"/>
    </location>
</feature>
<feature type="topological domain" description="Cytoplasmic" evidence="1">
    <location>
        <begin position="140"/>
        <end position="154"/>
    </location>
</feature>
<feature type="transmembrane region" description="Helical" evidence="2">
    <location>
        <begin position="155"/>
        <end position="175"/>
    </location>
</feature>
<feature type="topological domain" description="Periplasmic" evidence="1">
    <location>
        <begin position="176"/>
        <end position="177"/>
    </location>
</feature>
<feature type="transmembrane region" description="Helical" evidence="2">
    <location>
        <begin position="178"/>
        <end position="198"/>
    </location>
</feature>
<feature type="topological domain" description="Cytoplasmic" evidence="1">
    <location>
        <begin position="199"/>
        <end position="201"/>
    </location>
</feature>
<feature type="transmembrane region" description="Helical" evidence="2">
    <location>
        <begin position="202"/>
        <end position="222"/>
    </location>
</feature>
<feature type="topological domain" description="Periplasmic" evidence="1">
    <location>
        <begin position="223"/>
        <end position="278"/>
    </location>
</feature>
<feature type="transmembrane region" description="Helical" evidence="2">
    <location>
        <begin position="279"/>
        <end position="299"/>
    </location>
</feature>
<feature type="topological domain" description="Cytoplasmic" evidence="1">
    <location>
        <begin position="300"/>
        <end position="327"/>
    </location>
</feature>
<feature type="transmembrane region" description="Helical" evidence="2">
    <location>
        <begin position="328"/>
        <end position="348"/>
    </location>
</feature>
<feature type="topological domain" description="Periplasmic" evidence="1">
    <location>
        <begin position="349"/>
        <end position="354"/>
    </location>
</feature>
<feature type="transmembrane region" description="Helical" evidence="2">
    <location>
        <begin position="355"/>
        <end position="375"/>
    </location>
</feature>
<feature type="topological domain" description="Cytoplasmic" evidence="1">
    <location>
        <begin position="376"/>
        <end position="394"/>
    </location>
</feature>
<reference key="1">
    <citation type="journal article" date="2004" name="Science">
        <title>The genomic sequence of the accidental pathogen Legionella pneumophila.</title>
        <authorList>
            <person name="Chien M."/>
            <person name="Morozova I."/>
            <person name="Shi S."/>
            <person name="Sheng H."/>
            <person name="Chen J."/>
            <person name="Gomez S.M."/>
            <person name="Asamani G."/>
            <person name="Hill K."/>
            <person name="Nuara J."/>
            <person name="Feder M."/>
            <person name="Rineer J."/>
            <person name="Greenberg J.J."/>
            <person name="Steshenko V."/>
            <person name="Park S.H."/>
            <person name="Zhao B."/>
            <person name="Teplitskaya E."/>
            <person name="Edwards J.R."/>
            <person name="Pampou S."/>
            <person name="Georghiou A."/>
            <person name="Chou I.-C."/>
            <person name="Iannuccilli W."/>
            <person name="Ulz M.E."/>
            <person name="Kim D.H."/>
            <person name="Geringer-Sameth A."/>
            <person name="Goldsberry C."/>
            <person name="Morozov P."/>
            <person name="Fischer S.G."/>
            <person name="Segal G."/>
            <person name="Qu X."/>
            <person name="Rzhetsky A."/>
            <person name="Zhang P."/>
            <person name="Cayanis E."/>
            <person name="De Jong P.J."/>
            <person name="Ju J."/>
            <person name="Kalachikov S."/>
            <person name="Shuman H.A."/>
            <person name="Russo J.J."/>
        </authorList>
    </citation>
    <scope>NUCLEOTIDE SEQUENCE [LARGE SCALE GENOMIC DNA]</scope>
    <source>
        <strain>Philadelphia 1 / ATCC 33152 / DSM 7513</strain>
    </source>
</reference>
<accession>Q5ZSA4</accession>
<comment type="function">
    <text evidence="2">Peptidoglycan polymerase that is essential for cell division.</text>
</comment>
<comment type="catalytic activity">
    <reaction evidence="2">
        <text>[GlcNAc-(1-&gt;4)-Mur2Ac(oyl-L-Ala-gamma-D-Glu-L-Lys-D-Ala-D-Ala)](n)-di-trans,octa-cis-undecaprenyl diphosphate + beta-D-GlcNAc-(1-&gt;4)-Mur2Ac(oyl-L-Ala-gamma-D-Glu-L-Lys-D-Ala-D-Ala)-di-trans,octa-cis-undecaprenyl diphosphate = [GlcNAc-(1-&gt;4)-Mur2Ac(oyl-L-Ala-gamma-D-Glu-L-Lys-D-Ala-D-Ala)](n+1)-di-trans,octa-cis-undecaprenyl diphosphate + di-trans,octa-cis-undecaprenyl diphosphate + H(+)</text>
        <dbReference type="Rhea" id="RHEA:23708"/>
        <dbReference type="Rhea" id="RHEA-COMP:9602"/>
        <dbReference type="Rhea" id="RHEA-COMP:9603"/>
        <dbReference type="ChEBI" id="CHEBI:15378"/>
        <dbReference type="ChEBI" id="CHEBI:58405"/>
        <dbReference type="ChEBI" id="CHEBI:60033"/>
        <dbReference type="ChEBI" id="CHEBI:78435"/>
        <dbReference type="EC" id="2.4.99.28"/>
    </reaction>
</comment>
<comment type="pathway">
    <text evidence="2">Cell wall biogenesis; peptidoglycan biosynthesis.</text>
</comment>
<comment type="subcellular location">
    <subcellularLocation>
        <location evidence="2">Cell inner membrane</location>
        <topology evidence="2">Multi-pass membrane protein</topology>
    </subcellularLocation>
    <text evidence="2">Localizes to the division septum.</text>
</comment>
<comment type="similarity">
    <text evidence="2">Belongs to the SEDS family. FtsW subfamily.</text>
</comment>
<name>FTSW_LEGPH</name>
<keyword id="KW-0131">Cell cycle</keyword>
<keyword id="KW-0132">Cell division</keyword>
<keyword id="KW-0997">Cell inner membrane</keyword>
<keyword id="KW-1003">Cell membrane</keyword>
<keyword id="KW-0133">Cell shape</keyword>
<keyword id="KW-0961">Cell wall biogenesis/degradation</keyword>
<keyword id="KW-0328">Glycosyltransferase</keyword>
<keyword id="KW-0472">Membrane</keyword>
<keyword id="KW-0573">Peptidoglycan synthesis</keyword>
<keyword id="KW-1185">Reference proteome</keyword>
<keyword id="KW-0808">Transferase</keyword>
<keyword id="KW-0812">Transmembrane</keyword>
<keyword id="KW-1133">Transmembrane helix</keyword>